<evidence type="ECO:0000255" key="1">
    <source>
        <dbReference type="PROSITE-ProRule" id="PRU00159"/>
    </source>
</evidence>
<evidence type="ECO:0000255" key="2">
    <source>
        <dbReference type="PROSITE-ProRule" id="PRU10027"/>
    </source>
</evidence>
<evidence type="ECO:0000256" key="3">
    <source>
        <dbReference type="SAM" id="MobiDB-lite"/>
    </source>
</evidence>
<evidence type="ECO:0000269" key="4">
    <source>
    </source>
</evidence>
<evidence type="ECO:0000269" key="5">
    <source>
    </source>
</evidence>
<evidence type="ECO:0000269" key="6">
    <source>
    </source>
</evidence>
<evidence type="ECO:0000305" key="7"/>
<dbReference type="EC" id="2.7.12.2"/>
<dbReference type="EMBL" id="Z48230">
    <property type="protein sequence ID" value="CAA88264.1"/>
    <property type="molecule type" value="Genomic_DNA"/>
</dbReference>
<dbReference type="EMBL" id="Z95122">
    <property type="protein sequence ID" value="CAA88264.1"/>
    <property type="status" value="JOINED"/>
    <property type="molecule type" value="Genomic_DNA"/>
</dbReference>
<dbReference type="PIR" id="T22107">
    <property type="entry name" value="T22107"/>
</dbReference>
<dbReference type="RefSeq" id="NP_509682.1">
    <property type="nucleotide sequence ID" value="NM_077281.7"/>
</dbReference>
<dbReference type="SMR" id="Q20347"/>
<dbReference type="BioGRID" id="50442">
    <property type="interactions" value="6"/>
</dbReference>
<dbReference type="DIP" id="DIP-25523N"/>
<dbReference type="FunCoup" id="Q20347">
    <property type="interactions" value="2318"/>
</dbReference>
<dbReference type="IntAct" id="Q20347">
    <property type="interactions" value="3"/>
</dbReference>
<dbReference type="STRING" id="6239.F42G10.2.1"/>
<dbReference type="PaxDb" id="6239-F42G10.2"/>
<dbReference type="PeptideAtlas" id="Q20347"/>
<dbReference type="EnsemblMetazoa" id="F42G10.2.1">
    <property type="protein sequence ID" value="F42G10.2.1"/>
    <property type="gene ID" value="WBGene00003368"/>
</dbReference>
<dbReference type="GeneID" id="185682"/>
<dbReference type="KEGG" id="cel:CELE_F42G10.2"/>
<dbReference type="UCSC" id="F42G10.2">
    <property type="organism name" value="c. elegans"/>
</dbReference>
<dbReference type="AGR" id="WB:WBGene00003368"/>
<dbReference type="CTD" id="185682"/>
<dbReference type="WormBase" id="F42G10.2">
    <property type="protein sequence ID" value="CE10328"/>
    <property type="gene ID" value="WBGene00003368"/>
    <property type="gene designation" value="mkk-4"/>
</dbReference>
<dbReference type="eggNOG" id="KOG1006">
    <property type="taxonomic scope" value="Eukaryota"/>
</dbReference>
<dbReference type="GeneTree" id="ENSGT00940000154744"/>
<dbReference type="HOGENOM" id="CLU_000288_63_23_1"/>
<dbReference type="InParanoid" id="Q20347"/>
<dbReference type="OMA" id="PRLHTSY"/>
<dbReference type="OrthoDB" id="10252354at2759"/>
<dbReference type="PhylomeDB" id="Q20347"/>
<dbReference type="Reactome" id="R-CEL-2559580">
    <property type="pathway name" value="Oxidative Stress Induced Senescence"/>
</dbReference>
<dbReference type="Reactome" id="R-CEL-2871796">
    <property type="pathway name" value="FCERI mediated MAPK activation"/>
</dbReference>
<dbReference type="Reactome" id="R-CEL-450321">
    <property type="pathway name" value="JNK (c-Jun kinases) phosphorylation and activation mediated by activated human TAK1"/>
</dbReference>
<dbReference type="SignaLink" id="Q20347"/>
<dbReference type="PRO" id="PR:Q20347"/>
<dbReference type="Proteomes" id="UP000001940">
    <property type="component" value="Chromosome X"/>
</dbReference>
<dbReference type="Bgee" id="WBGene00003368">
    <property type="expression patterns" value="Expressed in pharyngeal muscle cell (C elegans) and 3 other cell types or tissues"/>
</dbReference>
<dbReference type="GO" id="GO:0005737">
    <property type="term" value="C:cytoplasm"/>
    <property type="evidence" value="ECO:0000314"/>
    <property type="project" value="WormBase"/>
</dbReference>
<dbReference type="GO" id="GO:0005524">
    <property type="term" value="F:ATP binding"/>
    <property type="evidence" value="ECO:0007669"/>
    <property type="project" value="UniProtKB-KW"/>
</dbReference>
<dbReference type="GO" id="GO:0004708">
    <property type="term" value="F:MAP kinase kinase activity"/>
    <property type="evidence" value="ECO:0000318"/>
    <property type="project" value="GO_Central"/>
</dbReference>
<dbReference type="GO" id="GO:0031435">
    <property type="term" value="F:mitogen-activated protein kinase kinase kinase binding"/>
    <property type="evidence" value="ECO:0000353"/>
    <property type="project" value="WormBase"/>
</dbReference>
<dbReference type="GO" id="GO:0106310">
    <property type="term" value="F:protein serine kinase activity"/>
    <property type="evidence" value="ECO:0007669"/>
    <property type="project" value="RHEA"/>
</dbReference>
<dbReference type="GO" id="GO:0004674">
    <property type="term" value="F:protein serine/threonine kinase activity"/>
    <property type="evidence" value="ECO:0007669"/>
    <property type="project" value="UniProtKB-KW"/>
</dbReference>
<dbReference type="GO" id="GO:0004713">
    <property type="term" value="F:protein tyrosine kinase activity"/>
    <property type="evidence" value="ECO:0007669"/>
    <property type="project" value="RHEA"/>
</dbReference>
<dbReference type="GO" id="GO:0031103">
    <property type="term" value="P:axon regeneration"/>
    <property type="evidence" value="ECO:0000316"/>
    <property type="project" value="UniProtKB"/>
</dbReference>
<dbReference type="GO" id="GO:0000165">
    <property type="term" value="P:MAPK cascade"/>
    <property type="evidence" value="ECO:0000315"/>
    <property type="project" value="UniProtKB"/>
</dbReference>
<dbReference type="GO" id="GO:0038066">
    <property type="term" value="P:p38MAPK cascade"/>
    <property type="evidence" value="ECO:0000315"/>
    <property type="project" value="WormBase"/>
</dbReference>
<dbReference type="GO" id="GO:0048691">
    <property type="term" value="P:positive regulation of axon extension involved in regeneration"/>
    <property type="evidence" value="ECO:0000315"/>
    <property type="project" value="UniProtKB"/>
</dbReference>
<dbReference type="GO" id="GO:0050807">
    <property type="term" value="P:regulation of synapse organization"/>
    <property type="evidence" value="ECO:0000315"/>
    <property type="project" value="WormBase"/>
</dbReference>
<dbReference type="GO" id="GO:0008582">
    <property type="term" value="P:regulation of synaptic assembly at neuromuscular junction"/>
    <property type="evidence" value="ECO:0000315"/>
    <property type="project" value="UniProtKB"/>
</dbReference>
<dbReference type="CDD" id="cd06616">
    <property type="entry name" value="PKc_MKK4"/>
    <property type="match status" value="1"/>
</dbReference>
<dbReference type="FunFam" id="3.30.200.20:FF:000040">
    <property type="entry name" value="Dual specificity mitogen-activated protein kinase kinase"/>
    <property type="match status" value="1"/>
</dbReference>
<dbReference type="FunFam" id="1.10.510.10:FF:000687">
    <property type="entry name" value="MAP kinase kinase MKK1/SSP32"/>
    <property type="match status" value="1"/>
</dbReference>
<dbReference type="Gene3D" id="3.30.200.20">
    <property type="entry name" value="Phosphorylase Kinase, domain 1"/>
    <property type="match status" value="1"/>
</dbReference>
<dbReference type="Gene3D" id="1.10.510.10">
    <property type="entry name" value="Transferase(Phosphotransferase) domain 1"/>
    <property type="match status" value="1"/>
</dbReference>
<dbReference type="InterPro" id="IPR011009">
    <property type="entry name" value="Kinase-like_dom_sf"/>
</dbReference>
<dbReference type="InterPro" id="IPR000719">
    <property type="entry name" value="Prot_kinase_dom"/>
</dbReference>
<dbReference type="InterPro" id="IPR017441">
    <property type="entry name" value="Protein_kinase_ATP_BS"/>
</dbReference>
<dbReference type="InterPro" id="IPR008271">
    <property type="entry name" value="Ser/Thr_kinase_AS"/>
</dbReference>
<dbReference type="PANTHER" id="PTHR48013:SF15">
    <property type="entry name" value="DUAL SPECIFICITY MITOGEN-ACTIVATED PROTEIN KINASE KINASE 4"/>
    <property type="match status" value="1"/>
</dbReference>
<dbReference type="PANTHER" id="PTHR48013">
    <property type="entry name" value="DUAL SPECIFICITY MITOGEN-ACTIVATED PROTEIN KINASE KINASE 5-RELATED"/>
    <property type="match status" value="1"/>
</dbReference>
<dbReference type="Pfam" id="PF00069">
    <property type="entry name" value="Pkinase"/>
    <property type="match status" value="1"/>
</dbReference>
<dbReference type="SMART" id="SM00220">
    <property type="entry name" value="S_TKc"/>
    <property type="match status" value="1"/>
</dbReference>
<dbReference type="SUPFAM" id="SSF56112">
    <property type="entry name" value="Protein kinase-like (PK-like)"/>
    <property type="match status" value="1"/>
</dbReference>
<dbReference type="PROSITE" id="PS00107">
    <property type="entry name" value="PROTEIN_KINASE_ATP"/>
    <property type="match status" value="1"/>
</dbReference>
<dbReference type="PROSITE" id="PS50011">
    <property type="entry name" value="PROTEIN_KINASE_DOM"/>
    <property type="match status" value="1"/>
</dbReference>
<dbReference type="PROSITE" id="PS00108">
    <property type="entry name" value="PROTEIN_KINASE_ST"/>
    <property type="match status" value="1"/>
</dbReference>
<protein>
    <recommendedName>
        <fullName>MAP kinase kinase mkk-4</fullName>
        <ecNumber>2.7.12.2</ecNumber>
    </recommendedName>
</protein>
<organism>
    <name type="scientific">Caenorhabditis elegans</name>
    <dbReference type="NCBI Taxonomy" id="6239"/>
    <lineage>
        <taxon>Eukaryota</taxon>
        <taxon>Metazoa</taxon>
        <taxon>Ecdysozoa</taxon>
        <taxon>Nematoda</taxon>
        <taxon>Chromadorea</taxon>
        <taxon>Rhabditida</taxon>
        <taxon>Rhabditina</taxon>
        <taxon>Rhabditomorpha</taxon>
        <taxon>Rhabditoidea</taxon>
        <taxon>Rhabditidae</taxon>
        <taxon>Peloderinae</taxon>
        <taxon>Caenorhabditis</taxon>
    </lineage>
</organism>
<sequence length="363" mass="41197">MVQEDDENLRNSMSLRPTSLSTRPTSLSVNGNEKTLPEESVLRSLSTGTLKYPDDEHLYTFSSANLQDLGAIGNGNFGTVYKMRHKETGKLIAVKRIRCNNIGHREQIRLLREHDTIVKSEKGPNIVKFYGAIFSEGDCWICMELMDISMDLLYKRVYMVKNSRLNENVVGHITVCTVDALDYLKKELKIIHRDVKPSNILVDGTGAVKLCDFGICGQLEESFAKTHDAGCQPYLAPERITSSDKYDVRSDVWSLGITLYEIATGKFPYQEWNSLFDQIATVVSGDPPILHPDSDDFHYSLPLVKFINTCLTKDRRHRPKYDTLKSFDFYRIYAVAGPEIEEAKRILGVEAIDTRNHPVDHRG</sequence>
<reference key="1">
    <citation type="journal article" date="1998" name="Science">
        <title>Genome sequence of the nematode C. elegans: a platform for investigating biology.</title>
        <authorList>
            <consortium name="The C. elegans sequencing consortium"/>
        </authorList>
    </citation>
    <scope>NUCLEOTIDE SEQUENCE [LARGE SCALE GENOMIC DNA]</scope>
    <source>
        <strain>Bristol N2</strain>
    </source>
</reference>
<reference key="2">
    <citation type="journal article" date="2001" name="Gene">
        <title>kin-18, a C. elegans protein kinase involved in feeding.</title>
        <authorList>
            <person name="Berman K.S."/>
            <person name="Hutchison M."/>
            <person name="Avery L."/>
            <person name="Cobb M.H."/>
        </authorList>
    </citation>
    <scope>TISSUE SPECIFICITY</scope>
</reference>
<reference key="3">
    <citation type="journal article" date="2005" name="Cell">
        <title>Regulation of a DLK-1 and p38 MAP kinase pathway by the ubiquitin ligase RPM-1 is required for presynaptic development.</title>
        <authorList>
            <person name="Nakata K."/>
            <person name="Abrams B."/>
            <person name="Grill B."/>
            <person name="Goncharov A."/>
            <person name="Huang X."/>
            <person name="Chisholm A.D."/>
            <person name="Jin Y."/>
        </authorList>
    </citation>
    <scope>FUNCTION</scope>
    <scope>SUBCELLULAR LOCATION</scope>
</reference>
<reference key="4">
    <citation type="journal article" date="2016" name="PLoS Genet.">
        <title>The MADD-3 LAMMER kinase interacts with a p38 MAP kinase pathway to regulate the display of the EVA-1 guidance receptor in Caenorhabditis elegans.</title>
        <authorList>
            <person name="D'Souza S.A."/>
            <person name="Rajendran L."/>
            <person name="Bagg R."/>
            <person name="Barbier L."/>
            <person name="van Pel D.M."/>
            <person name="Moshiri H."/>
            <person name="Roy P.J."/>
        </authorList>
    </citation>
    <scope>FUNCTION</scope>
    <scope>DISRUPTION PHENOTYPE</scope>
</reference>
<feature type="chain" id="PRO_0000086842" description="MAP kinase kinase mkk-4">
    <location>
        <begin position="1"/>
        <end position="363"/>
    </location>
</feature>
<feature type="domain" description="Protein kinase" evidence="1">
    <location>
        <begin position="66"/>
        <end position="330"/>
    </location>
</feature>
<feature type="region of interest" description="Disordered" evidence="3">
    <location>
        <begin position="1"/>
        <end position="38"/>
    </location>
</feature>
<feature type="compositionally biased region" description="Low complexity" evidence="3">
    <location>
        <begin position="14"/>
        <end position="28"/>
    </location>
</feature>
<feature type="active site" description="Proton acceptor" evidence="1 2">
    <location>
        <position position="194"/>
    </location>
</feature>
<feature type="binding site" evidence="1">
    <location>
        <begin position="72"/>
        <end position="80"/>
    </location>
    <ligand>
        <name>ATP</name>
        <dbReference type="ChEBI" id="CHEBI:30616"/>
    </ligand>
</feature>
<feature type="binding site" evidence="1">
    <location>
        <position position="95"/>
    </location>
    <ligand>
        <name>ATP</name>
        <dbReference type="ChEBI" id="CHEBI:30616"/>
    </ligand>
</feature>
<name>MKK4_CAEEL</name>
<proteinExistence type="evidence at transcript level"/>
<keyword id="KW-0067">ATP-binding</keyword>
<keyword id="KW-0963">Cytoplasm</keyword>
<keyword id="KW-0418">Kinase</keyword>
<keyword id="KW-0547">Nucleotide-binding</keyword>
<keyword id="KW-1185">Reference proteome</keyword>
<keyword id="KW-0723">Serine/threonine-protein kinase</keyword>
<keyword id="KW-0808">Transferase</keyword>
<accession>Q20347</accession>
<accession>O01707</accession>
<comment type="function">
    <text evidence="5 6">Activity is required in presynaptic neurons, in a dose-dependent manner, for normal presynaptic development and morphology (PubMed:15707898). Plays a role in the formation of muscle connections, also called muscle arm extensions, between the body wall and the motor axons in the dorsal and ventral cord (PubMed:27123983).</text>
</comment>
<comment type="catalytic activity">
    <reaction>
        <text>L-seryl-[protein] + ATP = O-phospho-L-seryl-[protein] + ADP + H(+)</text>
        <dbReference type="Rhea" id="RHEA:17989"/>
        <dbReference type="Rhea" id="RHEA-COMP:9863"/>
        <dbReference type="Rhea" id="RHEA-COMP:11604"/>
        <dbReference type="ChEBI" id="CHEBI:15378"/>
        <dbReference type="ChEBI" id="CHEBI:29999"/>
        <dbReference type="ChEBI" id="CHEBI:30616"/>
        <dbReference type="ChEBI" id="CHEBI:83421"/>
        <dbReference type="ChEBI" id="CHEBI:456216"/>
        <dbReference type="EC" id="2.7.12.2"/>
    </reaction>
</comment>
<comment type="catalytic activity">
    <reaction>
        <text>L-threonyl-[protein] + ATP = O-phospho-L-threonyl-[protein] + ADP + H(+)</text>
        <dbReference type="Rhea" id="RHEA:46608"/>
        <dbReference type="Rhea" id="RHEA-COMP:11060"/>
        <dbReference type="Rhea" id="RHEA-COMP:11605"/>
        <dbReference type="ChEBI" id="CHEBI:15378"/>
        <dbReference type="ChEBI" id="CHEBI:30013"/>
        <dbReference type="ChEBI" id="CHEBI:30616"/>
        <dbReference type="ChEBI" id="CHEBI:61977"/>
        <dbReference type="ChEBI" id="CHEBI:456216"/>
        <dbReference type="EC" id="2.7.12.2"/>
    </reaction>
</comment>
<comment type="catalytic activity">
    <reaction>
        <text>L-tyrosyl-[protein] + ATP = O-phospho-L-tyrosyl-[protein] + ADP + H(+)</text>
        <dbReference type="Rhea" id="RHEA:10596"/>
        <dbReference type="Rhea" id="RHEA-COMP:10136"/>
        <dbReference type="Rhea" id="RHEA-COMP:20101"/>
        <dbReference type="ChEBI" id="CHEBI:15378"/>
        <dbReference type="ChEBI" id="CHEBI:30616"/>
        <dbReference type="ChEBI" id="CHEBI:46858"/>
        <dbReference type="ChEBI" id="CHEBI:61978"/>
        <dbReference type="ChEBI" id="CHEBI:456216"/>
        <dbReference type="EC" id="2.7.12.2"/>
    </reaction>
</comment>
<comment type="subcellular location">
    <subcellularLocation>
        <location evidence="5">Cytoplasm</location>
    </subcellularLocation>
</comment>
<comment type="tissue specificity">
    <text evidence="4">Expressed in the pharynx, including the corpus, isthmus and terminal bulb.</text>
</comment>
<comment type="disruption phenotype">
    <text evidence="6">Defective extension of body wall muscle connections or arms towards the ventral nerve cord. Double knockout with madd-3 results in severe muscle arm extension defects.</text>
</comment>
<comment type="similarity">
    <text evidence="7">Belongs to the protein kinase superfamily. STE Ser/Thr protein kinase family. MAP kinase kinase subfamily.</text>
</comment>
<gene>
    <name type="primary">mkk-4</name>
    <name type="ORF">F42G10.2</name>
</gene>